<comment type="similarity">
    <text evidence="1">Belongs to the eukaryotic ribosomal protein eL34 family.</text>
</comment>
<protein>
    <recommendedName>
        <fullName evidence="1">Large ribosomal subunit protein eL34</fullName>
    </recommendedName>
    <alternativeName>
        <fullName evidence="2">50S ribosomal protein L34e</fullName>
    </alternativeName>
</protein>
<organism>
    <name type="scientific">Pyrobaculum islandicum (strain DSM 4184 / JCM 9189 / GEO3)</name>
    <dbReference type="NCBI Taxonomy" id="384616"/>
    <lineage>
        <taxon>Archaea</taxon>
        <taxon>Thermoproteota</taxon>
        <taxon>Thermoprotei</taxon>
        <taxon>Thermoproteales</taxon>
        <taxon>Thermoproteaceae</taxon>
        <taxon>Pyrobaculum</taxon>
    </lineage>
</organism>
<dbReference type="EMBL" id="CP000504">
    <property type="protein sequence ID" value="ABL87576.1"/>
    <property type="molecule type" value="Genomic_DNA"/>
</dbReference>
<dbReference type="RefSeq" id="WP_011762153.1">
    <property type="nucleotide sequence ID" value="NC_008701.1"/>
</dbReference>
<dbReference type="SMR" id="A1RRJ4"/>
<dbReference type="STRING" id="384616.Pisl_0398"/>
<dbReference type="GeneID" id="4616626"/>
<dbReference type="KEGG" id="pis:Pisl_0398"/>
<dbReference type="eggNOG" id="arCOG04168">
    <property type="taxonomic scope" value="Archaea"/>
</dbReference>
<dbReference type="HOGENOM" id="CLU_118652_2_0_2"/>
<dbReference type="OrthoDB" id="43096at2157"/>
<dbReference type="Proteomes" id="UP000002595">
    <property type="component" value="Chromosome"/>
</dbReference>
<dbReference type="GO" id="GO:1990904">
    <property type="term" value="C:ribonucleoprotein complex"/>
    <property type="evidence" value="ECO:0007669"/>
    <property type="project" value="UniProtKB-KW"/>
</dbReference>
<dbReference type="GO" id="GO:0005840">
    <property type="term" value="C:ribosome"/>
    <property type="evidence" value="ECO:0007669"/>
    <property type="project" value="UniProtKB-KW"/>
</dbReference>
<dbReference type="GO" id="GO:0003735">
    <property type="term" value="F:structural constituent of ribosome"/>
    <property type="evidence" value="ECO:0007669"/>
    <property type="project" value="InterPro"/>
</dbReference>
<dbReference type="GO" id="GO:0006412">
    <property type="term" value="P:translation"/>
    <property type="evidence" value="ECO:0007669"/>
    <property type="project" value="UniProtKB-UniRule"/>
</dbReference>
<dbReference type="Gene3D" id="6.20.370.70">
    <property type="match status" value="1"/>
</dbReference>
<dbReference type="HAMAP" id="MF_00349">
    <property type="entry name" value="Ribosomal_eL34"/>
    <property type="match status" value="1"/>
</dbReference>
<dbReference type="InterPro" id="IPR008195">
    <property type="entry name" value="Ribosomal_eL34"/>
</dbReference>
<dbReference type="InterPro" id="IPR018065">
    <property type="entry name" value="Ribosomal_eL34_CS"/>
</dbReference>
<dbReference type="InterPro" id="IPR047868">
    <property type="entry name" value="Ribosomal_L34e_arc-type"/>
</dbReference>
<dbReference type="NCBIfam" id="NF003143">
    <property type="entry name" value="PRK04059.1"/>
    <property type="match status" value="1"/>
</dbReference>
<dbReference type="Pfam" id="PF01199">
    <property type="entry name" value="Ribosomal_L34e"/>
    <property type="match status" value="1"/>
</dbReference>
<dbReference type="PRINTS" id="PR01250">
    <property type="entry name" value="RIBOSOMALL34"/>
</dbReference>
<dbReference type="PROSITE" id="PS01145">
    <property type="entry name" value="RIBOSOMAL_L34E"/>
    <property type="match status" value="1"/>
</dbReference>
<proteinExistence type="inferred from homology"/>
<accession>A1RRJ4</accession>
<gene>
    <name evidence="1" type="primary">rpl34e</name>
    <name type="ordered locus">Pisl_0398</name>
</gene>
<feature type="chain" id="PRO_1000133414" description="Large ribosomal subunit protein eL34">
    <location>
        <begin position="1"/>
        <end position="84"/>
    </location>
</feature>
<reference key="1">
    <citation type="submission" date="2006-12" db="EMBL/GenBank/DDBJ databases">
        <title>Complete sequence of Pyrobaculum islandicum DSM 4184.</title>
        <authorList>
            <person name="Copeland A."/>
            <person name="Lucas S."/>
            <person name="Lapidus A."/>
            <person name="Barry K."/>
            <person name="Detter J.C."/>
            <person name="Glavina del Rio T."/>
            <person name="Dalin E."/>
            <person name="Tice H."/>
            <person name="Pitluck S."/>
            <person name="Meincke L."/>
            <person name="Brettin T."/>
            <person name="Bruce D."/>
            <person name="Han C."/>
            <person name="Tapia R."/>
            <person name="Gilna P."/>
            <person name="Schmutz J."/>
            <person name="Larimer F."/>
            <person name="Land M."/>
            <person name="Hauser L."/>
            <person name="Kyrpides N."/>
            <person name="Mikhailova N."/>
            <person name="Cozen A.E."/>
            <person name="Fitz-Gibbon S.T."/>
            <person name="House C.H."/>
            <person name="Saltikov C."/>
            <person name="Lowe T."/>
            <person name="Richardson P."/>
        </authorList>
    </citation>
    <scope>NUCLEOTIDE SEQUENCE [LARGE SCALE GENOMIC DNA]</scope>
    <source>
        <strain>DSM 4184 / JCM 9189 / GEO3</strain>
    </source>
</reference>
<name>RL34_PYRIL</name>
<evidence type="ECO:0000255" key="1">
    <source>
        <dbReference type="HAMAP-Rule" id="MF_00349"/>
    </source>
</evidence>
<evidence type="ECO:0000305" key="2"/>
<keyword id="KW-0687">Ribonucleoprotein</keyword>
<keyword id="KW-0689">Ribosomal protein</keyword>
<sequence length="84" mass="9407">MPRPAYRSRSLRRVKVRTPGGRTVVHYEKRAKGVPKCPVTNLPLGGMNHKVYRFGISIRAPSRPYGGVFSHKVLARALRLAVRG</sequence>